<proteinExistence type="evidence at transcript level"/>
<keyword id="KW-0150">Chloroplast</keyword>
<keyword id="KW-0472">Membrane</keyword>
<keyword id="KW-0602">Photosynthesis</keyword>
<keyword id="KW-0934">Plastid</keyword>
<keyword id="KW-0677">Repeat</keyword>
<keyword id="KW-0691">RNA editing</keyword>
<keyword id="KW-0793">Thylakoid</keyword>
<keyword id="KW-0802">TPR repeat</keyword>
<evidence type="ECO:0000255" key="1">
    <source>
        <dbReference type="HAMAP-Rule" id="MF_00439"/>
    </source>
</evidence>
<evidence type="ECO:0000269" key="2">
    <source>
    </source>
</evidence>
<organism>
    <name type="scientific">Adiantum capillus-veneris</name>
    <name type="common">Maidenhair fern</name>
    <dbReference type="NCBI Taxonomy" id="13818"/>
    <lineage>
        <taxon>Eukaryota</taxon>
        <taxon>Viridiplantae</taxon>
        <taxon>Streptophyta</taxon>
        <taxon>Embryophyta</taxon>
        <taxon>Tracheophyta</taxon>
        <taxon>Polypodiopsida</taxon>
        <taxon>Polypodiidae</taxon>
        <taxon>Polypodiales</taxon>
        <taxon>Pteridineae</taxon>
        <taxon>Pteridaceae</taxon>
        <taxon>Vittarioideae</taxon>
        <taxon>Adiantum</taxon>
    </lineage>
</organism>
<dbReference type="EMBL" id="AY178864">
    <property type="protein sequence ID" value="AAP29393.2"/>
    <property type="molecule type" value="Genomic_DNA"/>
</dbReference>
<dbReference type="RefSeq" id="NP_848061.2">
    <property type="nucleotide sequence ID" value="NC_004766.1"/>
</dbReference>
<dbReference type="SMR" id="Q85FL9"/>
<dbReference type="GeneID" id="807393"/>
<dbReference type="GO" id="GO:0009535">
    <property type="term" value="C:chloroplast thylakoid membrane"/>
    <property type="evidence" value="ECO:0007669"/>
    <property type="project" value="UniProtKB-SubCell"/>
</dbReference>
<dbReference type="GO" id="GO:0015979">
    <property type="term" value="P:photosynthesis"/>
    <property type="evidence" value="ECO:0007669"/>
    <property type="project" value="UniProtKB-UniRule"/>
</dbReference>
<dbReference type="Gene3D" id="1.25.40.10">
    <property type="entry name" value="Tetratricopeptide repeat domain"/>
    <property type="match status" value="1"/>
</dbReference>
<dbReference type="HAMAP" id="MF_00439">
    <property type="entry name" value="Ycf3"/>
    <property type="match status" value="1"/>
</dbReference>
<dbReference type="InterPro" id="IPR022818">
    <property type="entry name" value="PSI_Ycf3_assembly"/>
</dbReference>
<dbReference type="InterPro" id="IPR011990">
    <property type="entry name" value="TPR-like_helical_dom_sf"/>
</dbReference>
<dbReference type="InterPro" id="IPR019734">
    <property type="entry name" value="TPR_rpt"/>
</dbReference>
<dbReference type="InterPro" id="IPR051685">
    <property type="entry name" value="Ycf3/AcsC/BcsC/TPR_MFPF"/>
</dbReference>
<dbReference type="NCBIfam" id="NF002725">
    <property type="entry name" value="PRK02603.1"/>
    <property type="match status" value="1"/>
</dbReference>
<dbReference type="PANTHER" id="PTHR44943">
    <property type="entry name" value="CELLULOSE SYNTHASE OPERON PROTEIN C"/>
    <property type="match status" value="1"/>
</dbReference>
<dbReference type="PANTHER" id="PTHR44943:SF8">
    <property type="entry name" value="TPR REPEAT-CONTAINING PROTEIN MJ0263"/>
    <property type="match status" value="1"/>
</dbReference>
<dbReference type="Pfam" id="PF00515">
    <property type="entry name" value="TPR_1"/>
    <property type="match status" value="1"/>
</dbReference>
<dbReference type="SMART" id="SM00028">
    <property type="entry name" value="TPR"/>
    <property type="match status" value="3"/>
</dbReference>
<dbReference type="SUPFAM" id="SSF48452">
    <property type="entry name" value="TPR-like"/>
    <property type="match status" value="1"/>
</dbReference>
<dbReference type="PROSITE" id="PS50005">
    <property type="entry name" value="TPR"/>
    <property type="match status" value="3"/>
</dbReference>
<dbReference type="PROSITE" id="PS50293">
    <property type="entry name" value="TPR_REGION"/>
    <property type="match status" value="1"/>
</dbReference>
<accession>Q85FL9</accession>
<sequence>MPRSQRNDNFIDKTFTILADILIRILPTTKREREAFIYYRDGMSAQSEGEYAEALGSYYKAMRLEIDSYDRSYILYNIGLIHTSNGNHAKALEYYFQALERNSFLPQAFNNMAVICHYRGEQAIYQGDLEISEAWFDQAAEYWRRAIALSPDNYAEAQNWLKITGRFSPSHRWESWNNSTRVA</sequence>
<gene>
    <name evidence="1" type="primary">ycf3</name>
</gene>
<geneLocation type="chloroplast"/>
<comment type="function">
    <text evidence="1">Essential for the assembly of the photosystem I (PSI) complex. May act as a chaperone-like factor to guide the assembly of the PSI subunits.</text>
</comment>
<comment type="subcellular location">
    <subcellularLocation>
        <location evidence="1">Plastid</location>
        <location evidence="1">Chloroplast thylakoid membrane</location>
        <topology evidence="1">Peripheral membrane protein</topology>
    </subcellularLocation>
</comment>
<comment type="RNA editing">
    <location>
        <position position="36" evidence="2"/>
    </location>
    <location>
        <position position="55" evidence="2"/>
    </location>
    <location>
        <position position="75" evidence="2"/>
    </location>
    <location>
        <position position="76" evidence="2"/>
    </location>
    <location>
        <position position="80" evidence="2"/>
    </location>
    <location>
        <position position="99" evidence="2"/>
    </location>
    <location>
        <position position="118" evidence="2"/>
    </location>
</comment>
<comment type="similarity">
    <text evidence="1">Belongs to the Ycf3 family.</text>
</comment>
<name>YCF3_ADICA</name>
<feature type="chain" id="PRO_0000217789" description="Photosystem I assembly protein Ycf3">
    <location>
        <begin position="1"/>
        <end position="183"/>
    </location>
</feature>
<feature type="repeat" description="TPR 1">
    <location>
        <begin position="35"/>
        <end position="68"/>
    </location>
</feature>
<feature type="repeat" description="TPR 2">
    <location>
        <begin position="72"/>
        <end position="105"/>
    </location>
</feature>
<feature type="repeat" description="TPR 3">
    <location>
        <begin position="120"/>
        <end position="153"/>
    </location>
</feature>
<reference key="1">
    <citation type="journal article" date="2003" name="DNA Res.">
        <title>Complete nucleotide sequence of the chloroplast genome from a leptosporangiate fern, Adiantum capillus-veneris L.</title>
        <authorList>
            <person name="Wolf P.G."/>
            <person name="Rowe C.A."/>
            <person name="Sinclair R.B."/>
            <person name="Hasebe M."/>
        </authorList>
    </citation>
    <scope>NUCLEOTIDE SEQUENCE [LARGE SCALE GENOMIC DNA]</scope>
</reference>
<reference key="2">
    <citation type="journal article" date="2004" name="Gene">
        <title>High levels of RNA editing in a vascular plant chloroplast genome: analysis of transcripts from the fern Adiantum capillus-veneris.</title>
        <authorList>
            <person name="Wolf P.G."/>
            <person name="Rowe C.A."/>
            <person name="Hasebe M."/>
        </authorList>
    </citation>
    <scope>NUCLEOTIDE SEQUENCE [GENOMIC DNA]</scope>
    <scope>RNA EDITING</scope>
</reference>
<protein>
    <recommendedName>
        <fullName evidence="1">Photosystem I assembly protein Ycf3</fullName>
    </recommendedName>
</protein>